<evidence type="ECO:0000255" key="1">
    <source>
        <dbReference type="HAMAP-Rule" id="MF_00574"/>
    </source>
</evidence>
<evidence type="ECO:0000303" key="2">
    <source>
    </source>
</evidence>
<evidence type="ECO:0000305" key="3"/>
<proteinExistence type="inferred from homology"/>
<sequence length="82" mass="8619">MSYEKVLQAGKIVIGTKQTIRALKEGEATEVIVAEDADLPIIEKVTAAANEANVPVTKVDSMKKLGKACKIQVGAAAVAILR</sequence>
<reference key="1">
    <citation type="journal article" date="2000" name="J. Bacteriol.">
        <title>Cloning and characterization of the str operon and elongation factor Tu expression in Bacillus stearothermophilus.</title>
        <authorList>
            <person name="Krasny L."/>
            <person name="Vacik T."/>
            <person name="Fucik V."/>
            <person name="Jonak J."/>
        </authorList>
    </citation>
    <scope>NUCLEOTIDE SEQUENCE [GENOMIC DNA]</scope>
    <source>
        <strain>ATCC 12977 / CCM 2184 / NCA 1492 / NCIMB 8920 / NRS T2026</strain>
    </source>
</reference>
<protein>
    <recommendedName>
        <fullName evidence="1">RNA-binding protein YbxF</fullName>
    </recommendedName>
    <alternativeName>
        <fullName evidence="3">Putative ribosomal protein L7Ae-like</fullName>
    </alternativeName>
    <alternativeName>
        <fullName evidence="1">Ribosomal protein eL8-like</fullName>
    </alternativeName>
</protein>
<gene>
    <name evidence="2" type="primary">ybxF</name>
</gene>
<feature type="chain" id="PRO_0000136811" description="RNA-binding protein YbxF">
    <location>
        <begin position="1"/>
        <end position="82"/>
    </location>
</feature>
<name>RXL7_GEOSE</name>
<keyword id="KW-0694">RNA-binding</keyword>
<accession>Q9EV99</accession>
<dbReference type="EMBL" id="AJ249558">
    <property type="protein sequence ID" value="CAC09926.1"/>
    <property type="molecule type" value="Genomic_DNA"/>
</dbReference>
<dbReference type="RefSeq" id="WP_095858708.1">
    <property type="nucleotide sequence ID" value="NZ_JARMTB010000045.1"/>
</dbReference>
<dbReference type="SMR" id="Q9EV99"/>
<dbReference type="GO" id="GO:0003723">
    <property type="term" value="F:RNA binding"/>
    <property type="evidence" value="ECO:0007669"/>
    <property type="project" value="UniProtKB-UniRule"/>
</dbReference>
<dbReference type="Gene3D" id="3.30.1330.30">
    <property type="match status" value="1"/>
</dbReference>
<dbReference type="HAMAP" id="MF_00574">
    <property type="entry name" value="Ribosomal_eL8_Bact"/>
    <property type="match status" value="1"/>
</dbReference>
<dbReference type="InterPro" id="IPR029064">
    <property type="entry name" value="Ribosomal_eL30-like_sf"/>
</dbReference>
<dbReference type="InterPro" id="IPR004038">
    <property type="entry name" value="Ribosomal_eL8/eL30/eS12/Gad45"/>
</dbReference>
<dbReference type="InterPro" id="IPR023460">
    <property type="entry name" value="RNA_bf_YbxF-like"/>
</dbReference>
<dbReference type="NCBIfam" id="NF010125">
    <property type="entry name" value="PRK13602.1"/>
    <property type="match status" value="1"/>
</dbReference>
<dbReference type="Pfam" id="PF01248">
    <property type="entry name" value="Ribosomal_L7Ae"/>
    <property type="match status" value="1"/>
</dbReference>
<dbReference type="SUPFAM" id="SSF55315">
    <property type="entry name" value="L30e-like"/>
    <property type="match status" value="1"/>
</dbReference>
<comment type="similarity">
    <text evidence="1">Belongs to the eukaryotic ribosomal protein eL8 family.</text>
</comment>
<organism>
    <name type="scientific">Geobacillus stearothermophilus</name>
    <name type="common">Bacillus stearothermophilus</name>
    <dbReference type="NCBI Taxonomy" id="1422"/>
    <lineage>
        <taxon>Bacteria</taxon>
        <taxon>Bacillati</taxon>
        <taxon>Bacillota</taxon>
        <taxon>Bacilli</taxon>
        <taxon>Bacillales</taxon>
        <taxon>Anoxybacillaceae</taxon>
        <taxon>Geobacillus</taxon>
    </lineage>
</organism>